<accession>B6JCS1</accession>
<accession>F8BZM8</accession>
<feature type="chain" id="PRO_1000088910" description="Ribosome-binding factor A">
    <location>
        <begin position="1"/>
        <end position="141"/>
    </location>
</feature>
<organism>
    <name type="scientific">Afipia carboxidovorans (strain ATCC 49405 / DSM 1227 / KCTC 32145 / OM5)</name>
    <name type="common">Oligotropha carboxidovorans</name>
    <dbReference type="NCBI Taxonomy" id="504832"/>
    <lineage>
        <taxon>Bacteria</taxon>
        <taxon>Pseudomonadati</taxon>
        <taxon>Pseudomonadota</taxon>
        <taxon>Alphaproteobacteria</taxon>
        <taxon>Hyphomicrobiales</taxon>
        <taxon>Nitrobacteraceae</taxon>
        <taxon>Afipia</taxon>
    </lineage>
</organism>
<keyword id="KW-0963">Cytoplasm</keyword>
<keyword id="KW-1185">Reference proteome</keyword>
<keyword id="KW-0690">Ribosome biogenesis</keyword>
<dbReference type="EMBL" id="CP001196">
    <property type="protein sequence ID" value="ACI91651.1"/>
    <property type="molecule type" value="Genomic_DNA"/>
</dbReference>
<dbReference type="EMBL" id="CP002826">
    <property type="protein sequence ID" value="AEI04762.1"/>
    <property type="molecule type" value="Genomic_DNA"/>
</dbReference>
<dbReference type="RefSeq" id="WP_012561682.1">
    <property type="nucleotide sequence ID" value="NC_015684.1"/>
</dbReference>
<dbReference type="SMR" id="B6JCS1"/>
<dbReference type="STRING" id="504832.OCA5_c00280"/>
<dbReference type="KEGG" id="oca:OCAR_4506"/>
<dbReference type="KEGG" id="ocg:OCA5_c00280"/>
<dbReference type="PATRIC" id="fig|504832.7.peg.31"/>
<dbReference type="eggNOG" id="COG0858">
    <property type="taxonomic scope" value="Bacteria"/>
</dbReference>
<dbReference type="HOGENOM" id="CLU_089475_1_0_5"/>
<dbReference type="OrthoDB" id="9805051at2"/>
<dbReference type="Proteomes" id="UP000007730">
    <property type="component" value="Chromosome"/>
</dbReference>
<dbReference type="GO" id="GO:0005829">
    <property type="term" value="C:cytosol"/>
    <property type="evidence" value="ECO:0007669"/>
    <property type="project" value="TreeGrafter"/>
</dbReference>
<dbReference type="GO" id="GO:0043024">
    <property type="term" value="F:ribosomal small subunit binding"/>
    <property type="evidence" value="ECO:0007669"/>
    <property type="project" value="TreeGrafter"/>
</dbReference>
<dbReference type="GO" id="GO:0030490">
    <property type="term" value="P:maturation of SSU-rRNA"/>
    <property type="evidence" value="ECO:0007669"/>
    <property type="project" value="UniProtKB-UniRule"/>
</dbReference>
<dbReference type="Gene3D" id="3.30.300.20">
    <property type="match status" value="1"/>
</dbReference>
<dbReference type="HAMAP" id="MF_00003">
    <property type="entry name" value="RbfA"/>
    <property type="match status" value="1"/>
</dbReference>
<dbReference type="InterPro" id="IPR015946">
    <property type="entry name" value="KH_dom-like_a/b"/>
</dbReference>
<dbReference type="InterPro" id="IPR000238">
    <property type="entry name" value="RbfA"/>
</dbReference>
<dbReference type="InterPro" id="IPR023799">
    <property type="entry name" value="RbfA_dom_sf"/>
</dbReference>
<dbReference type="InterPro" id="IPR020053">
    <property type="entry name" value="Ribosome-bd_factorA_CS"/>
</dbReference>
<dbReference type="NCBIfam" id="NF001802">
    <property type="entry name" value="PRK00521.2-5"/>
    <property type="match status" value="1"/>
</dbReference>
<dbReference type="NCBIfam" id="TIGR00082">
    <property type="entry name" value="rbfA"/>
    <property type="match status" value="1"/>
</dbReference>
<dbReference type="PANTHER" id="PTHR33515">
    <property type="entry name" value="RIBOSOME-BINDING FACTOR A, CHLOROPLASTIC-RELATED"/>
    <property type="match status" value="1"/>
</dbReference>
<dbReference type="PANTHER" id="PTHR33515:SF1">
    <property type="entry name" value="RIBOSOME-BINDING FACTOR A, CHLOROPLASTIC-RELATED"/>
    <property type="match status" value="1"/>
</dbReference>
<dbReference type="Pfam" id="PF02033">
    <property type="entry name" value="RBFA"/>
    <property type="match status" value="1"/>
</dbReference>
<dbReference type="SUPFAM" id="SSF89919">
    <property type="entry name" value="Ribosome-binding factor A, RbfA"/>
    <property type="match status" value="1"/>
</dbReference>
<dbReference type="PROSITE" id="PS01319">
    <property type="entry name" value="RBFA"/>
    <property type="match status" value="1"/>
</dbReference>
<gene>
    <name evidence="1" type="primary">rbfA</name>
    <name type="ordered locus">OCAR_4506</name>
    <name type="ordered locus">OCA5_c00280</name>
</gene>
<sequence length="141" mass="15571">MPRHSRGKSSSSASGASQRQLRVGELIRHAMADILAQGGVHDDTLAGHIITVPEVRMSPDLKLATVYVMPLGGHDTEAVLAALAHNKKFLRGEVAHRVNLKFAPELRFRVDERFDEAERIEKLLRTPAVQRDLNSDSDDNA</sequence>
<protein>
    <recommendedName>
        <fullName evidence="1">Ribosome-binding factor A</fullName>
    </recommendedName>
</protein>
<reference key="1">
    <citation type="journal article" date="2008" name="J. Bacteriol.">
        <title>Genome sequence of the chemolithoautotrophic bacterium Oligotropha carboxidovorans OM5T.</title>
        <authorList>
            <person name="Paul D."/>
            <person name="Bridges S."/>
            <person name="Burgess S.C."/>
            <person name="Dandass Y."/>
            <person name="Lawrence M.L."/>
        </authorList>
    </citation>
    <scope>NUCLEOTIDE SEQUENCE [LARGE SCALE GENOMIC DNA]</scope>
    <source>
        <strain>ATCC 49405 / DSM 1227 / KCTC 32145 / OM5</strain>
    </source>
</reference>
<reference key="2">
    <citation type="journal article" date="2011" name="J. Bacteriol.">
        <title>Complete genome sequences of the chemolithoautotrophic Oligotropha carboxidovorans strains OM4 and OM5.</title>
        <authorList>
            <person name="Volland S."/>
            <person name="Rachinger M."/>
            <person name="Strittmatter A."/>
            <person name="Daniel R."/>
            <person name="Gottschalk G."/>
            <person name="Meyer O."/>
        </authorList>
    </citation>
    <scope>NUCLEOTIDE SEQUENCE [LARGE SCALE GENOMIC DNA]</scope>
    <source>
        <strain>ATCC 49405 / DSM 1227 / KCTC 32145 / OM5</strain>
    </source>
</reference>
<evidence type="ECO:0000255" key="1">
    <source>
        <dbReference type="HAMAP-Rule" id="MF_00003"/>
    </source>
</evidence>
<name>RBFA_AFIC5</name>
<comment type="function">
    <text evidence="1">One of several proteins that assist in the late maturation steps of the functional core of the 30S ribosomal subunit. Associates with free 30S ribosomal subunits (but not with 30S subunits that are part of 70S ribosomes or polysomes). Required for efficient processing of 16S rRNA. May interact with the 5'-terminal helix region of 16S rRNA.</text>
</comment>
<comment type="subunit">
    <text evidence="1">Monomer. Binds 30S ribosomal subunits, but not 50S ribosomal subunits or 70S ribosomes.</text>
</comment>
<comment type="subcellular location">
    <subcellularLocation>
        <location evidence="1">Cytoplasm</location>
    </subcellularLocation>
</comment>
<comment type="similarity">
    <text evidence="1">Belongs to the RbfA family.</text>
</comment>
<proteinExistence type="inferred from homology"/>